<name>O16B_CONCN</name>
<comment type="function">
    <text evidence="4">Delta-conotoxins bind to site 6 of voltage-gated sodium channels (Nav) and inhibit the inactivation process. This toxin acts on Nav1.4/SCN4A and Nav1.6/SCN8A (EC(50)=2.3 uM).</text>
</comment>
<comment type="subcellular location">
    <subcellularLocation>
        <location evidence="3">Secreted</location>
    </subcellularLocation>
</comment>
<comment type="tissue specificity">
    <text evidence="9">Expressed by the venom duct.</text>
</comment>
<comment type="domain">
    <text evidence="1">The presence of a 'disulfide through disulfide knot' structurally defines this protein as a knottin.</text>
</comment>
<comment type="domain">
    <text evidence="8">The cysteine framework is VI/VII (C-C-CC-C-C).</text>
</comment>
<comment type="mass spectrometry">
    <text>Monoisotopic mass.</text>
</comment>
<comment type="mass spectrometry">
    <text>Monoisotopic mass.</text>
</comment>
<comment type="miscellaneous">
    <text evidence="4">Negative results: does not show activity on rNav1.2/SCN2A, rNav1.3/SCN3A, hNav1.5/SCN5A, Nav1.7/SCN9A, rNav1.8/SCN10A, Kv1.1/KCNA1, Kv1.3/KCNA3, Kv1.4/KCNA4, Kv1.5/KCNA5, hKv11.1/KCNH2/ERG1, shaker and DmNav1/para.</text>
</comment>
<comment type="miscellaneous">
    <text evidence="9">Found in the dissected venom (DV), but not in the injectable (milked) venom (IV).</text>
</comment>
<comment type="similarity">
    <text evidence="8">Belongs to the conotoxin O1 superfamily.</text>
</comment>
<protein>
    <recommendedName>
        <fullName evidence="6 7">Delta-conotoxin-like CnVIB</fullName>
        <shortName evidence="6 7">Delta-CnVIB</shortName>
    </recommendedName>
</protein>
<sequence>DECFSPGTFCGTKPGLCCSARCFSFFCISLEF</sequence>
<accession>P0CC13</accession>
<organism>
    <name type="scientific">Conus consors</name>
    <name type="common">Singed cone</name>
    <dbReference type="NCBI Taxonomy" id="101297"/>
    <lineage>
        <taxon>Eukaryota</taxon>
        <taxon>Metazoa</taxon>
        <taxon>Spiralia</taxon>
        <taxon>Lophotrochozoa</taxon>
        <taxon>Mollusca</taxon>
        <taxon>Gastropoda</taxon>
        <taxon>Caenogastropoda</taxon>
        <taxon>Neogastropoda</taxon>
        <taxon>Conoidea</taxon>
        <taxon>Conidae</taxon>
        <taxon>Conus</taxon>
        <taxon>Pionoconus</taxon>
    </lineage>
</organism>
<reference key="1">
    <citation type="thesis" date="1999" institute="University of La Rochelle" country="France">
        <title>Physico-chemical and pharmacological study of new toxins from the piscivorous cone snail Conus consors.</title>
        <authorList>
            <person name="Favreau P."/>
        </authorList>
    </citation>
    <scope>PROTEIN SEQUENCE</scope>
    <scope>FUNCTION</scope>
    <scope>HYDROXYLATION AT PRO-6 AND PRO-14</scope>
    <scope>IDENTIFICATION BY MASS SPECTROMETRY</scope>
    <source>
        <tissue>Venom</tissue>
    </source>
</reference>
<reference key="2">
    <citation type="journal article" date="2014" name="J. Biol. Chem.">
        <title>Delta-conotoxins synthesized using an acid-cleavable solubility tag approach reveal key structural determinants for NaV subtype selectivity.</title>
        <authorList>
            <person name="Peigneur S."/>
            <person name="Paolini-Bertrand M."/>
            <person name="Gaertner H."/>
            <person name="Biass D."/>
            <person name="Violette A."/>
            <person name="Stoecklin R."/>
            <person name="Favreau P."/>
            <person name="Tytgat J."/>
            <person name="Hartley O."/>
        </authorList>
    </citation>
    <scope>PROTEIN SEQUENCE</scope>
    <scope>FUNCTION</scope>
    <scope>SYNTHESIS</scope>
    <scope>MASS SPECTROMETRY</scope>
    <source>
        <tissue>Venom</tissue>
    </source>
</reference>
<reference key="3">
    <citation type="journal article" date="2009" name="J. Proteomics">
        <title>Comparative proteomic study of the venom of the piscivorous cone snail Conus consors.</title>
        <authorList>
            <person name="Biass D."/>
            <person name="Dutertre S."/>
            <person name="Gerbault A."/>
            <person name="Menou J.L."/>
            <person name="Offord R."/>
            <person name="Favreau P."/>
            <person name="Stocklin R."/>
        </authorList>
    </citation>
    <scope>MASS SPECTROMETRY</scope>
    <scope>SUBCELLULAR LOCATION</scope>
    <source>
        <tissue>Venom</tissue>
    </source>
</reference>
<keyword id="KW-0903">Direct protein sequencing</keyword>
<keyword id="KW-1015">Disulfide bond</keyword>
<keyword id="KW-0379">Hydroxylation</keyword>
<keyword id="KW-0872">Ion channel impairing toxin</keyword>
<keyword id="KW-0960">Knottin</keyword>
<keyword id="KW-0528">Neurotoxin</keyword>
<keyword id="KW-0638">Presynaptic neurotoxin</keyword>
<keyword id="KW-0964">Secreted</keyword>
<keyword id="KW-0800">Toxin</keyword>
<keyword id="KW-0738">Voltage-gated sodium channel impairing toxin</keyword>
<dbReference type="GO" id="GO:0005576">
    <property type="term" value="C:extracellular region"/>
    <property type="evidence" value="ECO:0007669"/>
    <property type="project" value="UniProtKB-SubCell"/>
</dbReference>
<dbReference type="GO" id="GO:0044231">
    <property type="term" value="C:host cell presynaptic membrane"/>
    <property type="evidence" value="ECO:0007669"/>
    <property type="project" value="UniProtKB-KW"/>
</dbReference>
<dbReference type="GO" id="GO:0017080">
    <property type="term" value="F:sodium channel regulator activity"/>
    <property type="evidence" value="ECO:0007669"/>
    <property type="project" value="UniProtKB-KW"/>
</dbReference>
<dbReference type="GO" id="GO:0090729">
    <property type="term" value="F:toxin activity"/>
    <property type="evidence" value="ECO:0007669"/>
    <property type="project" value="UniProtKB-KW"/>
</dbReference>
<feature type="peptide" id="PRO_0000390923" description="Delta-conotoxin-like CnVIB" evidence="4 5">
    <location>
        <begin position="1"/>
        <end position="32"/>
    </location>
</feature>
<feature type="modified residue" description="4-hydroxyproline" evidence="5">
    <location>
        <position position="6"/>
    </location>
</feature>
<feature type="modified residue" description="4-hydroxyproline" evidence="5">
    <location>
        <position position="14"/>
    </location>
</feature>
<feature type="disulfide bond" evidence="2">
    <location>
        <begin position="3"/>
        <end position="18"/>
    </location>
</feature>
<feature type="disulfide bond" evidence="2">
    <location>
        <begin position="10"/>
        <end position="22"/>
    </location>
</feature>
<feature type="disulfide bond" evidence="2">
    <location>
        <begin position="17"/>
        <end position="27"/>
    </location>
</feature>
<evidence type="ECO:0000250" key="1"/>
<evidence type="ECO:0000250" key="2">
    <source>
        <dbReference type="UniProtKB" id="P0CC15"/>
    </source>
</evidence>
<evidence type="ECO:0000269" key="3">
    <source>
    </source>
</evidence>
<evidence type="ECO:0000269" key="4">
    <source>
    </source>
</evidence>
<evidence type="ECO:0000269" key="5">
    <source ref="1"/>
</evidence>
<evidence type="ECO:0000303" key="6">
    <source>
    </source>
</evidence>
<evidence type="ECO:0000303" key="7">
    <source>
    </source>
</evidence>
<evidence type="ECO:0000305" key="8"/>
<evidence type="ECO:0000305" key="9">
    <source>
    </source>
</evidence>
<proteinExistence type="evidence at protein level"/>